<sequence length="353" mass="40248">MDYKSSLIQDGNPMENLEKQLICPICLEMFTKPVVILPCQHNLCRKCANDIFQAANPYWTSRGSSVSMSGGRFRCPTCRHEVIMDRHGVYGLQRNLLVENIIDIYKQECSSRPLQKGSHPMCKEHEDEKINIYCLTCEVPTCSMCKVFGIHKACEVAPLQSVFQGQKTELNNCISMLVAGNDRVQTIITQLEDSRRVTKENSHQVKEELSQKFDTLYAILDEKKSELLQRITQEQEKKLSFIEALIQQYQEQLDKSTKLVETAIQSLDEPGGATFLLTAKQLIKSIVEASKGCQLGKTEQGFENMDFFTLDLEHIADALRAIDFGTDEEEEEFIEEEDQEEEESTEGKEEGHQ</sequence>
<keyword id="KW-0002">3D-structure</keyword>
<keyword id="KW-0025">Alternative splicing</keyword>
<keyword id="KW-0175">Coiled coil</keyword>
<keyword id="KW-0963">Cytoplasm</keyword>
<keyword id="KW-0479">Metal-binding</keyword>
<keyword id="KW-0514">Muscle protein</keyword>
<keyword id="KW-0539">Nucleus</keyword>
<keyword id="KW-1267">Proteomics identification</keyword>
<keyword id="KW-1185">Reference proteome</keyword>
<keyword id="KW-0808">Transferase</keyword>
<keyword id="KW-0833">Ubl conjugation pathway</keyword>
<keyword id="KW-0862">Zinc</keyword>
<keyword id="KW-0863">Zinc-finger</keyword>
<reference key="1">
    <citation type="journal article" date="2001" name="J. Mol. Biol.">
        <title>Identification of muscle specific ring finger proteins as potential regulators of the titin kinase domain.</title>
        <authorList>
            <person name="Centner T."/>
            <person name="Yano J."/>
            <person name="Kimura E."/>
            <person name="McElhinny A.S."/>
            <person name="Pelin K."/>
            <person name="Witt C.C."/>
            <person name="Bang M.-L."/>
            <person name="Trombitas K."/>
            <person name="Granzier H."/>
            <person name="Gregorio C.C."/>
            <person name="Sorimachi H."/>
            <person name="Labeit S."/>
        </authorList>
    </citation>
    <scope>NUCLEOTIDE SEQUENCE [MRNA] (ISOFORM 1)</scope>
    <scope>VARIANT GLU-237</scope>
    <scope>INTERACTION WITH TTN; TRIM54 AND TRIM55</scope>
    <scope>SUBUNIT</scope>
    <scope>TISSUE SPECIFICITY</scope>
    <scope>DEVELOPMENTAL STAGE</scope>
    <scope>SUBCELLULAR LOCATION</scope>
</reference>
<reference key="2">
    <citation type="journal article" date="2002" name="Mol. Vis.">
        <title>Expressed sequence tag analysis of adult human iris for the NEIBank project: steroid-response factors and similarities with retinal pigment epithelium.</title>
        <authorList>
            <person name="Wistow G."/>
            <person name="Bernstein S.L."/>
            <person name="Ray S."/>
            <person name="Wyatt M.K."/>
            <person name="Behal A."/>
            <person name="Touchman J.W."/>
            <person name="Bouffard G."/>
            <person name="Smith D."/>
            <person name="Peterson K."/>
        </authorList>
    </citation>
    <scope>NUCLEOTIDE SEQUENCE [MRNA] (ISOFORM 1)</scope>
    <scope>TISSUE SPECIFICITY</scope>
    <source>
        <tissue>Iris</tissue>
    </source>
</reference>
<reference key="3">
    <citation type="submission" date="2000-03" db="EMBL/GenBank/DDBJ databases">
        <title>Characterisation of MURF2, a new muscle-specific RING finger protein of the RBCC family that associates with microtubules.</title>
        <authorList>
            <person name="Stanchi F."/>
        </authorList>
    </citation>
    <scope>NUCLEOTIDE SEQUENCE [MRNA] (ISOFORM 1)</scope>
    <source>
        <tissue>Skeletal muscle</tissue>
    </source>
</reference>
<reference key="4">
    <citation type="journal article" date="2001" name="J. Biol. Chem.">
        <title>A novel human striated muscle RING zinc finger protein, SMRZ, interacts with SMT3b via its RING domain.</title>
        <authorList>
            <person name="Dai K.-S."/>
            <person name="Liew C.-C."/>
        </authorList>
    </citation>
    <scope>PRELIMINARY NUCLEOTIDE SEQUENCE [MRNA]</scope>
    <scope>TISSUE SPECIFICITY</scope>
    <scope>SUBCELLULAR LOCATION</scope>
    <scope>INTERACTION WITH SUMO2</scope>
    <scope>MUTAGENESIS OF CYS-39; HIS-41; CYS-44 AND CYS-47</scope>
    <scope>DOMAIN</scope>
</reference>
<reference key="5">
    <citation type="journal article" date="2004" name="Nat. Genet.">
        <title>Complete sequencing and characterization of 21,243 full-length human cDNAs.</title>
        <authorList>
            <person name="Ota T."/>
            <person name="Suzuki Y."/>
            <person name="Nishikawa T."/>
            <person name="Otsuki T."/>
            <person name="Sugiyama T."/>
            <person name="Irie R."/>
            <person name="Wakamatsu A."/>
            <person name="Hayashi K."/>
            <person name="Sato H."/>
            <person name="Nagai K."/>
            <person name="Kimura K."/>
            <person name="Makita H."/>
            <person name="Sekine M."/>
            <person name="Obayashi M."/>
            <person name="Nishi T."/>
            <person name="Shibahara T."/>
            <person name="Tanaka T."/>
            <person name="Ishii S."/>
            <person name="Yamamoto J."/>
            <person name="Saito K."/>
            <person name="Kawai Y."/>
            <person name="Isono Y."/>
            <person name="Nakamura Y."/>
            <person name="Nagahari K."/>
            <person name="Murakami K."/>
            <person name="Yasuda T."/>
            <person name="Iwayanagi T."/>
            <person name="Wagatsuma M."/>
            <person name="Shiratori A."/>
            <person name="Sudo H."/>
            <person name="Hosoiri T."/>
            <person name="Kaku Y."/>
            <person name="Kodaira H."/>
            <person name="Kondo H."/>
            <person name="Sugawara M."/>
            <person name="Takahashi M."/>
            <person name="Kanda K."/>
            <person name="Yokoi T."/>
            <person name="Furuya T."/>
            <person name="Kikkawa E."/>
            <person name="Omura Y."/>
            <person name="Abe K."/>
            <person name="Kamihara K."/>
            <person name="Katsuta N."/>
            <person name="Sato K."/>
            <person name="Tanikawa M."/>
            <person name="Yamazaki M."/>
            <person name="Ninomiya K."/>
            <person name="Ishibashi T."/>
            <person name="Yamashita H."/>
            <person name="Murakawa K."/>
            <person name="Fujimori K."/>
            <person name="Tanai H."/>
            <person name="Kimata M."/>
            <person name="Watanabe M."/>
            <person name="Hiraoka S."/>
            <person name="Chiba Y."/>
            <person name="Ishida S."/>
            <person name="Ono Y."/>
            <person name="Takiguchi S."/>
            <person name="Watanabe S."/>
            <person name="Yosida M."/>
            <person name="Hotuta T."/>
            <person name="Kusano J."/>
            <person name="Kanehori K."/>
            <person name="Takahashi-Fujii A."/>
            <person name="Hara H."/>
            <person name="Tanase T.-O."/>
            <person name="Nomura Y."/>
            <person name="Togiya S."/>
            <person name="Komai F."/>
            <person name="Hara R."/>
            <person name="Takeuchi K."/>
            <person name="Arita M."/>
            <person name="Imose N."/>
            <person name="Musashino K."/>
            <person name="Yuuki H."/>
            <person name="Oshima A."/>
            <person name="Sasaki N."/>
            <person name="Aotsuka S."/>
            <person name="Yoshikawa Y."/>
            <person name="Matsunawa H."/>
            <person name="Ichihara T."/>
            <person name="Shiohata N."/>
            <person name="Sano S."/>
            <person name="Moriya S."/>
            <person name="Momiyama H."/>
            <person name="Satoh N."/>
            <person name="Takami S."/>
            <person name="Terashima Y."/>
            <person name="Suzuki O."/>
            <person name="Nakagawa S."/>
            <person name="Senoh A."/>
            <person name="Mizoguchi H."/>
            <person name="Goto Y."/>
            <person name="Shimizu F."/>
            <person name="Wakebe H."/>
            <person name="Hishigaki H."/>
            <person name="Watanabe T."/>
            <person name="Sugiyama A."/>
            <person name="Takemoto M."/>
            <person name="Kawakami B."/>
            <person name="Yamazaki M."/>
            <person name="Watanabe K."/>
            <person name="Kumagai A."/>
            <person name="Itakura S."/>
            <person name="Fukuzumi Y."/>
            <person name="Fujimori Y."/>
            <person name="Komiyama M."/>
            <person name="Tashiro H."/>
            <person name="Tanigami A."/>
            <person name="Fujiwara T."/>
            <person name="Ono T."/>
            <person name="Yamada K."/>
            <person name="Fujii Y."/>
            <person name="Ozaki K."/>
            <person name="Hirao M."/>
            <person name="Ohmori Y."/>
            <person name="Kawabata A."/>
            <person name="Hikiji T."/>
            <person name="Kobatake N."/>
            <person name="Inagaki H."/>
            <person name="Ikema Y."/>
            <person name="Okamoto S."/>
            <person name="Okitani R."/>
            <person name="Kawakami T."/>
            <person name="Noguchi S."/>
            <person name="Itoh T."/>
            <person name="Shigeta K."/>
            <person name="Senba T."/>
            <person name="Matsumura K."/>
            <person name="Nakajima Y."/>
            <person name="Mizuno T."/>
            <person name="Morinaga M."/>
            <person name="Sasaki M."/>
            <person name="Togashi T."/>
            <person name="Oyama M."/>
            <person name="Hata H."/>
            <person name="Watanabe M."/>
            <person name="Komatsu T."/>
            <person name="Mizushima-Sugano J."/>
            <person name="Satoh T."/>
            <person name="Shirai Y."/>
            <person name="Takahashi Y."/>
            <person name="Nakagawa K."/>
            <person name="Okumura K."/>
            <person name="Nagase T."/>
            <person name="Nomura N."/>
            <person name="Kikuchi H."/>
            <person name="Masuho Y."/>
            <person name="Yamashita R."/>
            <person name="Nakai K."/>
            <person name="Yada T."/>
            <person name="Nakamura Y."/>
            <person name="Ohara O."/>
            <person name="Isogai T."/>
            <person name="Sugano S."/>
        </authorList>
    </citation>
    <scope>NUCLEOTIDE SEQUENCE [LARGE SCALE MRNA] (ISOFORMS 1 AND 2)</scope>
    <source>
        <tissue>Heart</tissue>
        <tissue>Skeletal muscle</tissue>
    </source>
</reference>
<reference key="6">
    <citation type="journal article" date="2006" name="Nature">
        <title>The DNA sequence and biological annotation of human chromosome 1.</title>
        <authorList>
            <person name="Gregory S.G."/>
            <person name="Barlow K.F."/>
            <person name="McLay K.E."/>
            <person name="Kaul R."/>
            <person name="Swarbreck D."/>
            <person name="Dunham A."/>
            <person name="Scott C.E."/>
            <person name="Howe K.L."/>
            <person name="Woodfine K."/>
            <person name="Spencer C.C.A."/>
            <person name="Jones M.C."/>
            <person name="Gillson C."/>
            <person name="Searle S."/>
            <person name="Zhou Y."/>
            <person name="Kokocinski F."/>
            <person name="McDonald L."/>
            <person name="Evans R."/>
            <person name="Phillips K."/>
            <person name="Atkinson A."/>
            <person name="Cooper R."/>
            <person name="Jones C."/>
            <person name="Hall R.E."/>
            <person name="Andrews T.D."/>
            <person name="Lloyd C."/>
            <person name="Ainscough R."/>
            <person name="Almeida J.P."/>
            <person name="Ambrose K.D."/>
            <person name="Anderson F."/>
            <person name="Andrew R.W."/>
            <person name="Ashwell R.I.S."/>
            <person name="Aubin K."/>
            <person name="Babbage A.K."/>
            <person name="Bagguley C.L."/>
            <person name="Bailey J."/>
            <person name="Beasley H."/>
            <person name="Bethel G."/>
            <person name="Bird C.P."/>
            <person name="Bray-Allen S."/>
            <person name="Brown J.Y."/>
            <person name="Brown A.J."/>
            <person name="Buckley D."/>
            <person name="Burton J."/>
            <person name="Bye J."/>
            <person name="Carder C."/>
            <person name="Chapman J.C."/>
            <person name="Clark S.Y."/>
            <person name="Clarke G."/>
            <person name="Clee C."/>
            <person name="Cobley V."/>
            <person name="Collier R.E."/>
            <person name="Corby N."/>
            <person name="Coville G.J."/>
            <person name="Davies J."/>
            <person name="Deadman R."/>
            <person name="Dunn M."/>
            <person name="Earthrowl M."/>
            <person name="Ellington A.G."/>
            <person name="Errington H."/>
            <person name="Frankish A."/>
            <person name="Frankland J."/>
            <person name="French L."/>
            <person name="Garner P."/>
            <person name="Garnett J."/>
            <person name="Gay L."/>
            <person name="Ghori M.R.J."/>
            <person name="Gibson R."/>
            <person name="Gilby L.M."/>
            <person name="Gillett W."/>
            <person name="Glithero R.J."/>
            <person name="Grafham D.V."/>
            <person name="Griffiths C."/>
            <person name="Griffiths-Jones S."/>
            <person name="Grocock R."/>
            <person name="Hammond S."/>
            <person name="Harrison E.S.I."/>
            <person name="Hart E."/>
            <person name="Haugen E."/>
            <person name="Heath P.D."/>
            <person name="Holmes S."/>
            <person name="Holt K."/>
            <person name="Howden P.J."/>
            <person name="Hunt A.R."/>
            <person name="Hunt S.E."/>
            <person name="Hunter G."/>
            <person name="Isherwood J."/>
            <person name="James R."/>
            <person name="Johnson C."/>
            <person name="Johnson D."/>
            <person name="Joy A."/>
            <person name="Kay M."/>
            <person name="Kershaw J.K."/>
            <person name="Kibukawa M."/>
            <person name="Kimberley A.M."/>
            <person name="King A."/>
            <person name="Knights A.J."/>
            <person name="Lad H."/>
            <person name="Laird G."/>
            <person name="Lawlor S."/>
            <person name="Leongamornlert D.A."/>
            <person name="Lloyd D.M."/>
            <person name="Loveland J."/>
            <person name="Lovell J."/>
            <person name="Lush M.J."/>
            <person name="Lyne R."/>
            <person name="Martin S."/>
            <person name="Mashreghi-Mohammadi M."/>
            <person name="Matthews L."/>
            <person name="Matthews N.S.W."/>
            <person name="McLaren S."/>
            <person name="Milne S."/>
            <person name="Mistry S."/>
            <person name="Moore M.J.F."/>
            <person name="Nickerson T."/>
            <person name="O'Dell C.N."/>
            <person name="Oliver K."/>
            <person name="Palmeiri A."/>
            <person name="Palmer S.A."/>
            <person name="Parker A."/>
            <person name="Patel D."/>
            <person name="Pearce A.V."/>
            <person name="Peck A.I."/>
            <person name="Pelan S."/>
            <person name="Phelps K."/>
            <person name="Phillimore B.J."/>
            <person name="Plumb R."/>
            <person name="Rajan J."/>
            <person name="Raymond C."/>
            <person name="Rouse G."/>
            <person name="Saenphimmachak C."/>
            <person name="Sehra H.K."/>
            <person name="Sheridan E."/>
            <person name="Shownkeen R."/>
            <person name="Sims S."/>
            <person name="Skuce C.D."/>
            <person name="Smith M."/>
            <person name="Steward C."/>
            <person name="Subramanian S."/>
            <person name="Sycamore N."/>
            <person name="Tracey A."/>
            <person name="Tromans A."/>
            <person name="Van Helmond Z."/>
            <person name="Wall M."/>
            <person name="Wallis J.M."/>
            <person name="White S."/>
            <person name="Whitehead S.L."/>
            <person name="Wilkinson J.E."/>
            <person name="Willey D.L."/>
            <person name="Williams H."/>
            <person name="Wilming L."/>
            <person name="Wray P.W."/>
            <person name="Wu Z."/>
            <person name="Coulson A."/>
            <person name="Vaudin M."/>
            <person name="Sulston J.E."/>
            <person name="Durbin R.M."/>
            <person name="Hubbard T."/>
            <person name="Wooster R."/>
            <person name="Dunham I."/>
            <person name="Carter N.P."/>
            <person name="McVean G."/>
            <person name="Ross M.T."/>
            <person name="Harrow J."/>
            <person name="Olson M.V."/>
            <person name="Beck S."/>
            <person name="Rogers J."/>
            <person name="Bentley D.R."/>
        </authorList>
    </citation>
    <scope>NUCLEOTIDE SEQUENCE [LARGE SCALE GENOMIC DNA]</scope>
</reference>
<reference key="7">
    <citation type="journal article" date="2004" name="Genome Res.">
        <title>The status, quality, and expansion of the NIH full-length cDNA project: the Mammalian Gene Collection (MGC).</title>
        <authorList>
            <consortium name="The MGC Project Team"/>
        </authorList>
    </citation>
    <scope>NUCLEOTIDE SEQUENCE [LARGE SCALE MRNA] (ISOFORM 1)</scope>
    <scope>VARIANT GLU-237</scope>
    <source>
        <tissue>Skin</tissue>
    </source>
</reference>
<reference key="8">
    <citation type="journal article" date="2001" name="Science">
        <title>Identification of ubiquitin ligases required for skeletal muscle atrophy.</title>
        <authorList>
            <person name="Bodine S.C."/>
            <person name="Latres E."/>
            <person name="Baumhueter S."/>
            <person name="Lai V.K.-M."/>
            <person name="Nunez L."/>
            <person name="Clarke B.A."/>
            <person name="Poueymirou W.T."/>
            <person name="Panaro F.J."/>
            <person name="Na E."/>
            <person name="Dharmarajan K."/>
            <person name="Pan Z.-Q."/>
            <person name="Valenzuela D.M."/>
            <person name="DeChiara T.M."/>
            <person name="Stitt T.N."/>
            <person name="Yancopoulos G.D."/>
            <person name="Glass D.J."/>
        </authorList>
    </citation>
    <scope>TISSUE SPECIFICITY</scope>
</reference>
<reference key="9">
    <citation type="journal article" date="2002" name="J. Cell Biol.">
        <title>Muscle-specific RING finger-1 interacts with titin to regulate sarcomeric M-line and thick filament structure and may have nuclear functions via its interaction with glucocorticoid modulatory element binding protein-1.</title>
        <authorList>
            <person name="McElhinny A.S."/>
            <person name="Kakinuma K."/>
            <person name="Sorimachi H."/>
            <person name="Labeit S."/>
            <person name="Gregorio C.C."/>
        </authorList>
    </citation>
    <scope>SUBCELLULAR LOCATION</scope>
    <scope>DOMAIN</scope>
    <scope>FUNCTION</scope>
    <scope>INTERACTION WITH GMEB1</scope>
</reference>
<reference key="10">
    <citation type="journal article" date="2008" name="J. Mol. Biol.">
        <title>MuRF1-dependent regulation of systemic carbohydrate metabolism as revealed from transgenic mouse studies.</title>
        <authorList>
            <person name="Hirner S."/>
            <person name="Krohne C."/>
            <person name="Schuster A."/>
            <person name="Hoffmann S."/>
            <person name="Witt S."/>
            <person name="Erber R."/>
            <person name="Sticht C."/>
            <person name="Gasch A."/>
            <person name="Labeit S."/>
            <person name="Labeit D."/>
        </authorList>
    </citation>
    <scope>SUBCELLULAR LOCATION</scope>
</reference>
<reference key="11">
    <citation type="journal article" date="2008" name="J. Mol. Biol.">
        <title>Muscle RING-finger protein-1 (MuRF1) as a connector of muscle energy metabolism and protein synthesis.</title>
        <authorList>
            <person name="Koyama S."/>
            <person name="Hata S."/>
            <person name="Witt C.C."/>
            <person name="Ono Y."/>
            <person name="Lerche S."/>
            <person name="Ojima K."/>
            <person name="Chiba T."/>
            <person name="Doi N."/>
            <person name="Kitamura F."/>
            <person name="Tanaka K."/>
            <person name="Abe K."/>
            <person name="Witt S.H."/>
            <person name="Rybin V."/>
            <person name="Gasch A."/>
            <person name="Franz T."/>
            <person name="Labeit S."/>
            <person name="Sorimachi H."/>
        </authorList>
    </citation>
    <scope>INTERACTION WITH CKM</scope>
    <scope>FUNCTION</scope>
</reference>
<reference key="12">
    <citation type="submission" date="2006-06" db="PDB data bank">
        <title>Solution structure of the B-box domain of the human tripartite motif-containing 63 protein.</title>
        <authorList>
            <consortium name="RIKEN structural genomics initiative (RSGI)"/>
        </authorList>
    </citation>
    <scope>STRUCTURE BY NMR OF 119-169</scope>
</reference>
<reference key="13">
    <citation type="journal article" date="2008" name="Biochemistry">
        <title>Structural analysis of B-Box 2 from MuRF1: identification of a novel self-association pattern in a RING-like fold.</title>
        <authorList>
            <person name="Mrosek M."/>
            <person name="Meier S."/>
            <person name="Ucurum-Fotiadis Z."/>
            <person name="von Castelmur E."/>
            <person name="Hedbom E."/>
            <person name="Lustig A."/>
            <person name="Grzesiek S."/>
            <person name="Labeit D."/>
            <person name="Labeit S."/>
            <person name="Mayans O."/>
        </authorList>
    </citation>
    <scope>X-RAY CRYSTALLOGRAPHY (1.9 ANGSTROMS) OF 117-161 IN COMPLEX WITH ZINC IONS</scope>
    <scope>DOMAIN</scope>
    <scope>SUBUNIT</scope>
</reference>
<reference key="14">
    <citation type="journal article" date="2014" name="Int. J. Mol. Sci.">
        <title>Rare variants in genes encoding MuRF1 and MuRF2 are modifiers of hypertrophic cardiomyopathy.</title>
        <authorList>
            <person name="Su M."/>
            <person name="Wang J."/>
            <person name="Kang L."/>
            <person name="Wang Y."/>
            <person name="Zou Y."/>
            <person name="Feng X."/>
            <person name="Wang D."/>
            <person name="Ahmad F."/>
            <person name="Zhou X."/>
            <person name="Hui R."/>
            <person name="Song L."/>
        </authorList>
    </citation>
    <scope>VARIANTS LEU-5; ARG-61; SER-73; CYS-86; HIS-86; PHE-101; ASP-126; MET-232; ASN-254; 299-GLU--GLN-353 DEL; ILE-305; ASP-318; ASP-321 AND ARG-351</scope>
</reference>
<gene>
    <name type="primary">TRIM63</name>
    <name type="synonym">IRF</name>
    <name type="synonym">MURF1</name>
    <name type="synonym">RNF28</name>
    <name type="synonym">SMRZ</name>
</gene>
<name>TRI63_HUMAN</name>
<evidence type="ECO:0000250" key="1"/>
<evidence type="ECO:0000255" key="2"/>
<evidence type="ECO:0000255" key="3">
    <source>
        <dbReference type="PROSITE-ProRule" id="PRU00024"/>
    </source>
</evidence>
<evidence type="ECO:0000255" key="4">
    <source>
        <dbReference type="PROSITE-ProRule" id="PRU00175"/>
    </source>
</evidence>
<evidence type="ECO:0000255" key="5">
    <source>
        <dbReference type="PROSITE-ProRule" id="PRU00586"/>
    </source>
</evidence>
<evidence type="ECO:0000256" key="6">
    <source>
        <dbReference type="SAM" id="MobiDB-lite"/>
    </source>
</evidence>
<evidence type="ECO:0000269" key="7">
    <source>
    </source>
</evidence>
<evidence type="ECO:0000269" key="8">
    <source>
    </source>
</evidence>
<evidence type="ECO:0000269" key="9">
    <source>
    </source>
</evidence>
<evidence type="ECO:0000269" key="10">
    <source>
    </source>
</evidence>
<evidence type="ECO:0000269" key="11">
    <source>
    </source>
</evidence>
<evidence type="ECO:0000269" key="12">
    <source>
    </source>
</evidence>
<evidence type="ECO:0000269" key="13">
    <source>
    </source>
</evidence>
<evidence type="ECO:0000269" key="14">
    <source>
    </source>
</evidence>
<evidence type="ECO:0000269" key="15">
    <source>
    </source>
</evidence>
<evidence type="ECO:0000303" key="16">
    <source>
    </source>
</evidence>
<evidence type="ECO:0000305" key="17"/>
<evidence type="ECO:0007829" key="18">
    <source>
        <dbReference type="PDB" id="2D8U"/>
    </source>
</evidence>
<evidence type="ECO:0007829" key="19">
    <source>
        <dbReference type="PDB" id="3DDT"/>
    </source>
</evidence>
<evidence type="ECO:0007829" key="20">
    <source>
        <dbReference type="PDB" id="4M3L"/>
    </source>
</evidence>
<comment type="function">
    <text evidence="10 13">E3 ubiquitin ligase. Mediates the ubiquitination and subsequent proteasomal degradation of CKM, GMEB1 and HIBADH. Regulates the proteasomal degradation of muscle proteins under amino acid starvation, where muscle protein is catabolized to provide other organs with amino acids. Inhibits de novo skeletal muscle protein synthesis under amino acid starvation. Regulates proteasomal degradation of cardiac troponin I/TNNI3 and probably of other sarcomeric-associated proteins. May play a role in striated muscle atrophy and hypertrophy by regulating an anti-hypertrophic PKC-mediated signaling pathway. May regulate the organization of myofibrils through TTN in muscle cells.</text>
</comment>
<comment type="catalytic activity">
    <reaction>
        <text>S-ubiquitinyl-[E2 ubiquitin-conjugating enzyme]-L-cysteine + [acceptor protein]-L-lysine = [E2 ubiquitin-conjugating enzyme]-L-cysteine + N(6)-ubiquitinyl-[acceptor protein]-L-lysine.</text>
        <dbReference type="EC" id="2.3.2.27"/>
    </reaction>
</comment>
<comment type="pathway">
    <text>Protein modification; protein ubiquitination.</text>
</comment>
<comment type="subunit">
    <text evidence="1 7 8 10 13 14">Homodimer. Homooligomer and heterooligomer. Interacts with SUMO2, titin/TTN and GMEB1. Interacts with TRIM54 and probably with TRIM55 and TNNI3. Forms a ternary complex with RACK1 and PRKCE (By similarity). Interacts with CKM.</text>
</comment>
<comment type="interaction">
    <interactant intactId="EBI-5661333">
        <id>Q969Q1</id>
    </interactant>
    <interactant intactId="EBI-356265">
        <id>Q8IX12</id>
        <label>CCAR1</label>
    </interactant>
    <organismsDiffer>false</organismsDiffer>
    <experiments>2</experiments>
</comment>
<comment type="interaction">
    <interactant intactId="EBI-5661333">
        <id>Q969Q1</id>
    </interactant>
    <interactant intactId="EBI-740686">
        <id>Q5TAQ9</id>
        <label>DCAF8</label>
    </interactant>
    <organismsDiffer>false</organismsDiffer>
    <experiments>3</experiments>
</comment>
<comment type="interaction">
    <interactant intactId="EBI-5661333">
        <id>Q969Q1</id>
    </interactant>
    <interactant intactId="EBI-351467">
        <id>P26641</id>
        <label>EEF1G</label>
    </interactant>
    <organismsDiffer>false</organismsDiffer>
    <experiments>2</experiments>
</comment>
<comment type="interaction">
    <interactant intactId="EBI-5661333">
        <id>Q969Q1</id>
    </interactant>
    <interactant intactId="EBI-2339219">
        <id>Q08426</id>
        <label>EHHADH</label>
    </interactant>
    <organismsDiffer>false</organismsDiffer>
    <experiments>3</experiments>
</comment>
<comment type="interaction">
    <interactant intactId="EBI-5661333">
        <id>Q969Q1</id>
    </interactant>
    <interactant intactId="EBI-2255048">
        <id>Q96RP9</id>
        <label>GFM1</label>
    </interactant>
    <organismsDiffer>false</organismsDiffer>
    <experiments>2</experiments>
</comment>
<comment type="interaction">
    <interactant intactId="EBI-5661333">
        <id>Q969Q1</id>
    </interactant>
    <interactant intactId="EBI-912501">
        <id>Q8IXM3</id>
        <label>MRPL41</label>
    </interactant>
    <organismsDiffer>false</organismsDiffer>
    <experiments>2</experiments>
</comment>
<comment type="interaction">
    <interactant intactId="EBI-5661333">
        <id>Q969Q1</id>
    </interactant>
    <interactant intactId="EBI-744402">
        <id>Q9NP98</id>
        <label>MYOZ1</label>
    </interactant>
    <organismsDiffer>false</organismsDiffer>
    <experiments>2</experiments>
</comment>
<comment type="interaction">
    <interactant intactId="EBI-5661333">
        <id>Q969Q1</id>
    </interactant>
    <interactant intactId="EBI-681210">
        <id>Q8WZ42</id>
        <label>TTN</label>
    </interactant>
    <organismsDiffer>false</organismsDiffer>
    <experiments>3</experiments>
</comment>
<comment type="interaction">
    <interactant intactId="EBI-5661333">
        <id>Q969Q1</id>
    </interactant>
    <interactant intactId="EBI-714351">
        <id>Q92995</id>
        <label>USP13</label>
    </interactant>
    <organismsDiffer>false</organismsDiffer>
    <experiments>2</experiments>
</comment>
<comment type="subcellular location">
    <subcellularLocation>
        <location>Cytoplasm</location>
    </subcellularLocation>
    <subcellularLocation>
        <location evidence="1">Nucleus</location>
    </subcellularLocation>
    <subcellularLocation>
        <location>Cytoplasm</location>
        <location>Myofibril</location>
        <location>Sarcomere</location>
        <location>M line</location>
    </subcellularLocation>
    <subcellularLocation>
        <location>Cytoplasm</location>
        <location>Myofibril</location>
        <location>Sarcomere</location>
        <location>Z line</location>
    </subcellularLocation>
    <text evidence="1">Colocalizes with TNNI3 in myocytes (By similarity). Localizes to the M- and Z-lines in skeletal muscle.</text>
</comment>
<comment type="alternative products">
    <event type="alternative splicing"/>
    <isoform>
        <id>Q969Q1-1</id>
        <name>1</name>
        <sequence type="displayed"/>
    </isoform>
    <isoform>
        <id>Q969Q1-2</id>
        <name>2</name>
        <sequence type="described" ref="VSP_055443"/>
    </isoform>
</comment>
<comment type="tissue specificity">
    <text evidence="7 8 9 11">Muscle specific. Selectively expressed in heart and skeletal muscle. Also expressed in the iris.</text>
</comment>
<comment type="developmental stage">
    <text evidence="7">Expressed throughout all developmental stages.</text>
</comment>
<comment type="domain">
    <text evidence="1">The RING-type zinc finger mediates interaction with SUMO2 and localization to the nucleus. Also required for the E3 ubiquitin ligase activity (By similarity).</text>
</comment>
<comment type="domain">
    <text evidence="8 10 14">The B box-type zinc finger mediates homodimerization.</text>
</comment>
<comment type="caution">
    <text evidence="17">It is uncertain whether Met-1 or Met-14 is the initiator.</text>
</comment>
<comment type="sequence caution" evidence="17">
    <conflict type="frameshift">
        <sequence resource="EMBL-CDS" id="AAK52497"/>
    </conflict>
</comment>
<comment type="sequence caution" evidence="17">
    <conflict type="miscellaneous discrepancy">
        <sequence resource="EMBL-CDS" id="AAK52497"/>
    </conflict>
    <text>Sequencing errors.</text>
</comment>
<comment type="sequence caution" evidence="17">
    <conflict type="erroneous initiation">
        <sequence resource="EMBL-CDS" id="CAC33173"/>
    </conflict>
</comment>
<dbReference type="EC" id="2.3.2.27"/>
<dbReference type="EMBL" id="AJ291713">
    <property type="protein sequence ID" value="CAC33173.1"/>
    <property type="status" value="ALT_INIT"/>
    <property type="molecule type" value="mRNA"/>
</dbReference>
<dbReference type="EMBL" id="AF353673">
    <property type="protein sequence ID" value="AAK39519.1"/>
    <property type="molecule type" value="mRNA"/>
</dbReference>
<dbReference type="EMBL" id="AJ276484">
    <property type="protein sequence ID" value="CAC81706.1"/>
    <property type="molecule type" value="mRNA"/>
</dbReference>
<dbReference type="EMBL" id="AF361946">
    <property type="protein sequence ID" value="AAK52497.1"/>
    <property type="status" value="ALT_SEQ"/>
    <property type="molecule type" value="mRNA"/>
</dbReference>
<dbReference type="EMBL" id="AK056942">
    <property type="protein sequence ID" value="BAB71318.1"/>
    <property type="molecule type" value="mRNA"/>
</dbReference>
<dbReference type="EMBL" id="AK297820">
    <property type="protein sequence ID" value="BAG60157.1"/>
    <property type="molecule type" value="mRNA"/>
</dbReference>
<dbReference type="EMBL" id="AL391650">
    <property type="status" value="NOT_ANNOTATED_CDS"/>
    <property type="molecule type" value="Genomic_DNA"/>
</dbReference>
<dbReference type="EMBL" id="BC080529">
    <property type="protein sequence ID" value="AAH80529.1"/>
    <property type="molecule type" value="mRNA"/>
</dbReference>
<dbReference type="CCDS" id="CCDS273.1">
    <molecule id="Q969Q1-1"/>
</dbReference>
<dbReference type="RefSeq" id="NP_115977.2">
    <molecule id="Q969Q1-1"/>
    <property type="nucleotide sequence ID" value="NM_032588.3"/>
</dbReference>
<dbReference type="PDB" id="2D8U">
    <property type="method" value="NMR"/>
    <property type="chains" value="A=119-169"/>
</dbReference>
<dbReference type="PDB" id="3DDT">
    <property type="method" value="X-ray"/>
    <property type="resolution" value="1.90 A"/>
    <property type="chains" value="A/B/C=117-161"/>
</dbReference>
<dbReference type="PDB" id="4M3L">
    <property type="method" value="X-ray"/>
    <property type="resolution" value="2.10 A"/>
    <property type="chains" value="A/B/C/D=214-271"/>
</dbReference>
<dbReference type="PDBsum" id="2D8U"/>
<dbReference type="PDBsum" id="3DDT"/>
<dbReference type="PDBsum" id="4M3L"/>
<dbReference type="BMRB" id="Q969Q1"/>
<dbReference type="SMR" id="Q969Q1"/>
<dbReference type="BioGRID" id="124195">
    <property type="interactions" value="336"/>
</dbReference>
<dbReference type="FunCoup" id="Q969Q1">
    <property type="interactions" value="159"/>
</dbReference>
<dbReference type="IntAct" id="Q969Q1">
    <property type="interactions" value="331"/>
</dbReference>
<dbReference type="MINT" id="Q969Q1"/>
<dbReference type="STRING" id="9606.ENSP00000363390"/>
<dbReference type="GlyGen" id="Q969Q1">
    <property type="glycosylation" value="1 site, 1 O-linked glycan (1 site)"/>
</dbReference>
<dbReference type="iPTMnet" id="Q969Q1"/>
<dbReference type="PhosphoSitePlus" id="Q969Q1"/>
<dbReference type="BioMuta" id="TRIM63"/>
<dbReference type="DMDM" id="21362898"/>
<dbReference type="MassIVE" id="Q969Q1"/>
<dbReference type="PaxDb" id="9606-ENSP00000363390"/>
<dbReference type="PeptideAtlas" id="Q969Q1"/>
<dbReference type="ProteomicsDB" id="75814">
    <molecule id="Q969Q1-1"/>
</dbReference>
<dbReference type="Antibodypedia" id="30555">
    <property type="antibodies" value="367 antibodies from 36 providers"/>
</dbReference>
<dbReference type="DNASU" id="84676"/>
<dbReference type="Ensembl" id="ENST00000374272.4">
    <molecule id="Q969Q1-1"/>
    <property type="protein sequence ID" value="ENSP00000363390.3"/>
    <property type="gene ID" value="ENSG00000158022.7"/>
</dbReference>
<dbReference type="GeneID" id="84676"/>
<dbReference type="KEGG" id="hsa:84676"/>
<dbReference type="MANE-Select" id="ENST00000374272.4">
    <property type="protein sequence ID" value="ENSP00000363390.3"/>
    <property type="RefSeq nucleotide sequence ID" value="NM_032588.4"/>
    <property type="RefSeq protein sequence ID" value="NP_115977.2"/>
</dbReference>
<dbReference type="UCSC" id="uc001bli.3">
    <molecule id="Q969Q1-1"/>
    <property type="organism name" value="human"/>
</dbReference>
<dbReference type="AGR" id="HGNC:16007"/>
<dbReference type="CTD" id="84676"/>
<dbReference type="DisGeNET" id="84676"/>
<dbReference type="GeneCards" id="TRIM63"/>
<dbReference type="HGNC" id="HGNC:16007">
    <property type="gene designation" value="TRIM63"/>
</dbReference>
<dbReference type="HPA" id="ENSG00000158022">
    <property type="expression patterns" value="Tissue enriched (skeletal)"/>
</dbReference>
<dbReference type="MalaCards" id="TRIM63"/>
<dbReference type="MIM" id="606131">
    <property type="type" value="gene"/>
</dbReference>
<dbReference type="neXtProt" id="NX_Q969Q1"/>
<dbReference type="OpenTargets" id="ENSG00000158022"/>
<dbReference type="PharmGKB" id="PA34431"/>
<dbReference type="VEuPathDB" id="HostDB:ENSG00000158022"/>
<dbReference type="eggNOG" id="KOG2177">
    <property type="taxonomic scope" value="Eukaryota"/>
</dbReference>
<dbReference type="GeneTree" id="ENSGT00940000156529"/>
<dbReference type="HOGENOM" id="CLU_013137_5_1_1"/>
<dbReference type="InParanoid" id="Q969Q1"/>
<dbReference type="OMA" id="NQLEESC"/>
<dbReference type="OrthoDB" id="5351233at2759"/>
<dbReference type="PAN-GO" id="Q969Q1">
    <property type="GO annotations" value="3 GO annotations based on evolutionary models"/>
</dbReference>
<dbReference type="PhylomeDB" id="Q969Q1"/>
<dbReference type="TreeFam" id="TF331669"/>
<dbReference type="PathwayCommons" id="Q969Q1"/>
<dbReference type="Reactome" id="R-HSA-9615017">
    <property type="pathway name" value="FOXO-mediated transcription of oxidative stress, metabolic and neuronal genes"/>
</dbReference>
<dbReference type="Reactome" id="R-HSA-983168">
    <property type="pathway name" value="Antigen processing: Ubiquitination &amp; Proteasome degradation"/>
</dbReference>
<dbReference type="SignaLink" id="Q969Q1"/>
<dbReference type="SIGNOR" id="Q969Q1"/>
<dbReference type="UniPathway" id="UPA00143"/>
<dbReference type="BioGRID-ORCS" id="84676">
    <property type="hits" value="13 hits in 1192 CRISPR screens"/>
</dbReference>
<dbReference type="CD-CODE" id="1C4BF022">
    <property type="entry name" value="Cytoplasmic bodies"/>
</dbReference>
<dbReference type="ChiTaRS" id="TRIM63">
    <property type="organism name" value="human"/>
</dbReference>
<dbReference type="EvolutionaryTrace" id="Q969Q1"/>
<dbReference type="GeneWiki" id="TRIM63"/>
<dbReference type="GenomeRNAi" id="84676"/>
<dbReference type="Pharos" id="Q969Q1">
    <property type="development level" value="Tbio"/>
</dbReference>
<dbReference type="PRO" id="PR:Q969Q1"/>
<dbReference type="Proteomes" id="UP000005640">
    <property type="component" value="Chromosome 1"/>
</dbReference>
<dbReference type="RNAct" id="Q969Q1">
    <property type="molecule type" value="protein"/>
</dbReference>
<dbReference type="Bgee" id="ENSG00000158022">
    <property type="expression patterns" value="Expressed in gastrocnemius and 111 other cell types or tissues"/>
</dbReference>
<dbReference type="GO" id="GO:0005737">
    <property type="term" value="C:cytoplasm"/>
    <property type="evidence" value="ECO:0000314"/>
    <property type="project" value="UniProtKB"/>
</dbReference>
<dbReference type="GO" id="GO:0031430">
    <property type="term" value="C:M band"/>
    <property type="evidence" value="ECO:0007669"/>
    <property type="project" value="UniProtKB-SubCell"/>
</dbReference>
<dbReference type="GO" id="GO:0005874">
    <property type="term" value="C:microtubule"/>
    <property type="evidence" value="ECO:0000303"/>
    <property type="project" value="UniProtKB"/>
</dbReference>
<dbReference type="GO" id="GO:0005634">
    <property type="term" value="C:nucleus"/>
    <property type="evidence" value="ECO:0007669"/>
    <property type="project" value="UniProtKB-SubCell"/>
</dbReference>
<dbReference type="GO" id="GO:0030018">
    <property type="term" value="C:Z disc"/>
    <property type="evidence" value="ECO:0007669"/>
    <property type="project" value="UniProtKB-SubCell"/>
</dbReference>
<dbReference type="GO" id="GO:0031432">
    <property type="term" value="F:titin binding"/>
    <property type="evidence" value="ECO:0000314"/>
    <property type="project" value="UniProtKB"/>
</dbReference>
<dbReference type="GO" id="GO:0061630">
    <property type="term" value="F:ubiquitin protein ligase activity"/>
    <property type="evidence" value="ECO:0000314"/>
    <property type="project" value="FlyBase"/>
</dbReference>
<dbReference type="GO" id="GO:0008270">
    <property type="term" value="F:zinc ion binding"/>
    <property type="evidence" value="ECO:0007669"/>
    <property type="project" value="UniProtKB-KW"/>
</dbReference>
<dbReference type="GO" id="GO:0045087">
    <property type="term" value="P:innate immune response"/>
    <property type="evidence" value="ECO:0000318"/>
    <property type="project" value="GO_Central"/>
</dbReference>
<dbReference type="GO" id="GO:0006936">
    <property type="term" value="P:muscle contraction"/>
    <property type="evidence" value="ECO:0007669"/>
    <property type="project" value="Ensembl"/>
</dbReference>
<dbReference type="GO" id="GO:0010614">
    <property type="term" value="P:negative regulation of cardiac muscle hypertrophy"/>
    <property type="evidence" value="ECO:0007669"/>
    <property type="project" value="Ensembl"/>
</dbReference>
<dbReference type="GO" id="GO:0045820">
    <property type="term" value="P:negative regulation of glycolytic process"/>
    <property type="evidence" value="ECO:0000315"/>
    <property type="project" value="FlyBase"/>
</dbReference>
<dbReference type="GO" id="GO:0016567">
    <property type="term" value="P:protein ubiquitination"/>
    <property type="evidence" value="ECO:0007669"/>
    <property type="project" value="UniProtKB-UniPathway"/>
</dbReference>
<dbReference type="GO" id="GO:0014878">
    <property type="term" value="P:response to electrical stimulus involved in regulation of muscle adaptation"/>
    <property type="evidence" value="ECO:0000250"/>
    <property type="project" value="UniProtKB"/>
</dbReference>
<dbReference type="GO" id="GO:0051384">
    <property type="term" value="P:response to glucocorticoid"/>
    <property type="evidence" value="ECO:0007669"/>
    <property type="project" value="Ensembl"/>
</dbReference>
<dbReference type="GO" id="GO:0070555">
    <property type="term" value="P:response to interleukin-1"/>
    <property type="evidence" value="ECO:0007669"/>
    <property type="project" value="Ensembl"/>
</dbReference>
<dbReference type="GO" id="GO:0007165">
    <property type="term" value="P:signal transduction"/>
    <property type="evidence" value="ECO:0000303"/>
    <property type="project" value="UniProtKB"/>
</dbReference>
<dbReference type="GO" id="GO:0014732">
    <property type="term" value="P:skeletal muscle atrophy"/>
    <property type="evidence" value="ECO:0007669"/>
    <property type="project" value="Ensembl"/>
</dbReference>
<dbReference type="CDD" id="cd19831">
    <property type="entry name" value="Bbox2_MuRF1_C-II"/>
    <property type="match status" value="1"/>
</dbReference>
<dbReference type="CDD" id="cd16759">
    <property type="entry name" value="RING-HC_MuRF1"/>
    <property type="match status" value="1"/>
</dbReference>
<dbReference type="FunFam" id="3.30.40.10:FF:000014">
    <property type="entry name" value="probable E3 ubiquitin-protein ligase MID2"/>
    <property type="match status" value="1"/>
</dbReference>
<dbReference type="FunFam" id="1.20.5.170:FF:000022">
    <property type="entry name" value="Tripartite motif containing 55"/>
    <property type="match status" value="1"/>
</dbReference>
<dbReference type="FunFam" id="3.30.160.60:FF:000140">
    <property type="entry name" value="Tripartite motif containing 55"/>
    <property type="match status" value="1"/>
</dbReference>
<dbReference type="Gene3D" id="1.20.5.170">
    <property type="match status" value="1"/>
</dbReference>
<dbReference type="Gene3D" id="3.30.160.60">
    <property type="entry name" value="Classic Zinc Finger"/>
    <property type="match status" value="1"/>
</dbReference>
<dbReference type="Gene3D" id="3.30.40.10">
    <property type="entry name" value="Zinc/RING finger domain, C3HC4 (zinc finger)"/>
    <property type="match status" value="1"/>
</dbReference>
<dbReference type="InterPro" id="IPR017903">
    <property type="entry name" value="COS_domain"/>
</dbReference>
<dbReference type="InterPro" id="IPR050617">
    <property type="entry name" value="E3_ligase_FN3/SPRY"/>
</dbReference>
<dbReference type="InterPro" id="IPR042667">
    <property type="entry name" value="TRIM63_RING-HC"/>
</dbReference>
<dbReference type="InterPro" id="IPR027370">
    <property type="entry name" value="Znf-RING_euk"/>
</dbReference>
<dbReference type="InterPro" id="IPR000315">
    <property type="entry name" value="Znf_B-box"/>
</dbReference>
<dbReference type="InterPro" id="IPR001841">
    <property type="entry name" value="Znf_RING"/>
</dbReference>
<dbReference type="InterPro" id="IPR013083">
    <property type="entry name" value="Znf_RING/FYVE/PHD"/>
</dbReference>
<dbReference type="InterPro" id="IPR017907">
    <property type="entry name" value="Znf_RING_CS"/>
</dbReference>
<dbReference type="PANTHER" id="PTHR24099">
    <property type="entry name" value="E3 UBIQUITIN-PROTEIN LIGASE TRIM36-RELATED"/>
    <property type="match status" value="1"/>
</dbReference>
<dbReference type="PANTHER" id="PTHR24099:SF17">
    <property type="entry name" value="TRIPARTITE MOTIF CONTAINING 55"/>
    <property type="match status" value="1"/>
</dbReference>
<dbReference type="Pfam" id="PF00643">
    <property type="entry name" value="zf-B_box"/>
    <property type="match status" value="1"/>
</dbReference>
<dbReference type="Pfam" id="PF13445">
    <property type="entry name" value="zf-RING_UBOX"/>
    <property type="match status" value="1"/>
</dbReference>
<dbReference type="SMART" id="SM00336">
    <property type="entry name" value="BBOX"/>
    <property type="match status" value="1"/>
</dbReference>
<dbReference type="SMART" id="SM00184">
    <property type="entry name" value="RING"/>
    <property type="match status" value="1"/>
</dbReference>
<dbReference type="SUPFAM" id="SSF57845">
    <property type="entry name" value="B-box zinc-binding domain"/>
    <property type="match status" value="1"/>
</dbReference>
<dbReference type="SUPFAM" id="SSF57850">
    <property type="entry name" value="RING/U-box"/>
    <property type="match status" value="1"/>
</dbReference>
<dbReference type="PROSITE" id="PS51262">
    <property type="entry name" value="COS"/>
    <property type="match status" value="1"/>
</dbReference>
<dbReference type="PROSITE" id="PS50119">
    <property type="entry name" value="ZF_BBOX"/>
    <property type="match status" value="1"/>
</dbReference>
<dbReference type="PROSITE" id="PS00518">
    <property type="entry name" value="ZF_RING_1"/>
    <property type="match status" value="1"/>
</dbReference>
<dbReference type="PROSITE" id="PS50089">
    <property type="entry name" value="ZF_RING_2"/>
    <property type="match status" value="1"/>
</dbReference>
<organism>
    <name type="scientific">Homo sapiens</name>
    <name type="common">Human</name>
    <dbReference type="NCBI Taxonomy" id="9606"/>
    <lineage>
        <taxon>Eukaryota</taxon>
        <taxon>Metazoa</taxon>
        <taxon>Chordata</taxon>
        <taxon>Craniata</taxon>
        <taxon>Vertebrata</taxon>
        <taxon>Euteleostomi</taxon>
        <taxon>Mammalia</taxon>
        <taxon>Eutheria</taxon>
        <taxon>Euarchontoglires</taxon>
        <taxon>Primates</taxon>
        <taxon>Haplorrhini</taxon>
        <taxon>Catarrhini</taxon>
        <taxon>Hominidae</taxon>
        <taxon>Homo</taxon>
    </lineage>
</organism>
<feature type="chain" id="PRO_0000056290" description="E3 ubiquitin-protein ligase TRIM63">
    <location>
        <begin position="1"/>
        <end position="353"/>
    </location>
</feature>
<feature type="domain" description="COS" evidence="5">
    <location>
        <begin position="267"/>
        <end position="325"/>
    </location>
</feature>
<feature type="zinc finger region" description="RING-type" evidence="4">
    <location>
        <begin position="23"/>
        <end position="79"/>
    </location>
</feature>
<feature type="zinc finger region" description="B box-type" evidence="3">
    <location>
        <begin position="117"/>
        <end position="159"/>
    </location>
</feature>
<feature type="region of interest" description="Interaction with TTN" evidence="7">
    <location>
        <begin position="74"/>
        <end position="218"/>
    </location>
</feature>
<feature type="region of interest" description="Disordered" evidence="6">
    <location>
        <begin position="326"/>
        <end position="353"/>
    </location>
</feature>
<feature type="coiled-coil region" evidence="2">
    <location>
        <begin position="207"/>
        <end position="269"/>
    </location>
</feature>
<feature type="compositionally biased region" description="Acidic residues" evidence="6">
    <location>
        <begin position="326"/>
        <end position="344"/>
    </location>
</feature>
<feature type="binding site" evidence="3">
    <location>
        <position position="122"/>
    </location>
    <ligand>
        <name>Zn(2+)</name>
        <dbReference type="ChEBI" id="CHEBI:29105"/>
    </ligand>
</feature>
<feature type="binding site" evidence="3">
    <location>
        <position position="125"/>
    </location>
    <ligand>
        <name>Zn(2+)</name>
        <dbReference type="ChEBI" id="CHEBI:29105"/>
    </ligand>
</feature>
<feature type="binding site" evidence="3">
    <location>
        <position position="145"/>
    </location>
    <ligand>
        <name>Zn(2+)</name>
        <dbReference type="ChEBI" id="CHEBI:29105"/>
    </ligand>
</feature>
<feature type="binding site" evidence="3">
    <location>
        <position position="151"/>
    </location>
    <ligand>
        <name>Zn(2+)</name>
        <dbReference type="ChEBI" id="CHEBI:29105"/>
    </ligand>
</feature>
<feature type="splice variant" id="VSP_055443" description="In isoform 2." evidence="16">
    <location>
        <begin position="104"/>
        <end position="131"/>
    </location>
</feature>
<feature type="sequence variant" id="VAR_074092" description="Rare variant; found in a patient with hypertrophic cardiomyopathy; uncertain significance; dbSNP:rs762015648." evidence="15">
    <original>S</original>
    <variation>L</variation>
    <location>
        <position position="5"/>
    </location>
</feature>
<feature type="sequence variant" id="VAR_074093" description="In dbSNP:rs2050678831." evidence="15">
    <original>S</original>
    <variation>R</variation>
    <location>
        <position position="61"/>
    </location>
</feature>
<feature type="sequence variant" id="VAR_074094" description="Rare variant; found in a patient with hypertrophic cardiomyopathy; uncertain significance; dbSNP:rs758754060." evidence="15">
    <original>F</original>
    <variation>S</variation>
    <location>
        <position position="73"/>
    </location>
</feature>
<feature type="sequence variant" id="VAR_074095" description="Rare variant; found in a patient with hypertrophic cardiomyopathy; uncertain significance; dbSNP:rs529429430." evidence="15">
    <original>R</original>
    <variation>C</variation>
    <location>
        <position position="86"/>
    </location>
</feature>
<feature type="sequence variant" id="VAR_074096" description="Rare variant; found in a patient with hypertrophic cardiomyopathy; uncertain significance; dbSNP:rs1338320582." evidence="15">
    <original>R</original>
    <variation>H</variation>
    <location>
        <position position="86"/>
    </location>
</feature>
<feature type="sequence variant" id="VAR_074097" description="Rare variant; found in a patient with hypertrophic cardiomyopathy; uncertain significance." evidence="15">
    <original>I</original>
    <variation>F</variation>
    <location>
        <position position="101"/>
    </location>
</feature>
<feature type="sequence variant" id="VAR_074098" description="In dbSNP:rs142601731." evidence="15">
    <original>E</original>
    <variation>D</variation>
    <location>
        <position position="126"/>
    </location>
</feature>
<feature type="sequence variant" id="VAR_074099" description="Rare variant; found in a patient with hypertrophic cardiomyopathy; uncertain significance; dbSNP:rs376414719." evidence="15">
    <original>T</original>
    <variation>M</variation>
    <location>
        <position position="232"/>
    </location>
</feature>
<feature type="sequence variant" id="VAR_020116" description="In dbSNP:rs2275950." evidence="7 12">
    <original>K</original>
    <variation>E</variation>
    <location>
        <position position="237"/>
    </location>
</feature>
<feature type="sequence variant" id="VAR_074100" evidence="15">
    <original>D</original>
    <variation>N</variation>
    <location>
        <position position="254"/>
    </location>
</feature>
<feature type="sequence variant" id="VAR_086949" evidence="15">
    <location>
        <begin position="299"/>
        <end position="353"/>
    </location>
</feature>
<feature type="sequence variant" id="VAR_074101" evidence="15">
    <original>M</original>
    <variation>I</variation>
    <location>
        <position position="305"/>
    </location>
</feature>
<feature type="sequence variant" id="VAR_074102" description="Rare variant; found in a patient with hypertrophic cardiomyopathy; uncertain significance; dbSNP:rs201397530." evidence="15">
    <original>A</original>
    <variation>D</variation>
    <location>
        <position position="318"/>
    </location>
</feature>
<feature type="sequence variant" id="VAR_074103" evidence="15">
    <original>A</original>
    <variation>D</variation>
    <location>
        <position position="321"/>
    </location>
</feature>
<feature type="sequence variant" id="VAR_074104" description="In dbSNP:rs202001619." evidence="15">
    <original>G</original>
    <variation>R</variation>
    <location>
        <position position="351"/>
    </location>
</feature>
<feature type="mutagenesis site" description="Loss of SUMO2-binding." evidence="8">
    <original>C</original>
    <variation>A</variation>
    <location>
        <position position="39"/>
    </location>
</feature>
<feature type="mutagenesis site" description="Loss of SUMO2-binding." evidence="8">
    <original>H</original>
    <variation>A</variation>
    <location>
        <position position="41"/>
    </location>
</feature>
<feature type="mutagenesis site" description="Loss of SUMO2-binding." evidence="8">
    <original>C</original>
    <variation>A</variation>
    <location>
        <position position="44"/>
    </location>
</feature>
<feature type="mutagenesis site" description="Loss of SUMO2-binding." evidence="8">
    <original>C</original>
    <variation>A</variation>
    <location>
        <position position="47"/>
    </location>
</feature>
<feature type="strand" evidence="19">
    <location>
        <begin position="123"/>
        <end position="125"/>
    </location>
</feature>
<feature type="strand" evidence="19">
    <location>
        <begin position="132"/>
        <end position="134"/>
    </location>
</feature>
<feature type="turn" evidence="19">
    <location>
        <begin position="135"/>
        <end position="138"/>
    </location>
</feature>
<feature type="strand" evidence="19">
    <location>
        <begin position="139"/>
        <end position="141"/>
    </location>
</feature>
<feature type="helix" evidence="19">
    <location>
        <begin position="143"/>
        <end position="148"/>
    </location>
</feature>
<feature type="turn" evidence="19">
    <location>
        <begin position="150"/>
        <end position="153"/>
    </location>
</feature>
<feature type="strand" evidence="19">
    <location>
        <begin position="156"/>
        <end position="158"/>
    </location>
</feature>
<feature type="turn" evidence="18">
    <location>
        <begin position="159"/>
        <end position="161"/>
    </location>
</feature>
<feature type="helix" evidence="20">
    <location>
        <begin position="214"/>
        <end position="267"/>
    </location>
</feature>
<protein>
    <recommendedName>
        <fullName>E3 ubiquitin-protein ligase TRIM63</fullName>
        <ecNumber>2.3.2.27</ecNumber>
    </recommendedName>
    <alternativeName>
        <fullName>Iris RING finger protein</fullName>
    </alternativeName>
    <alternativeName>
        <fullName>Muscle-specific RING finger protein 1</fullName>
        <shortName>MuRF-1</shortName>
        <shortName>MuRF1</shortName>
    </alternativeName>
    <alternativeName>
        <fullName>RING finger protein 28</fullName>
    </alternativeName>
    <alternativeName>
        <fullName evidence="17">RING-type E3 ubiquitin transferase TRIM63</fullName>
    </alternativeName>
    <alternativeName>
        <fullName>Striated muscle RING zinc finger protein</fullName>
    </alternativeName>
    <alternativeName>
        <fullName>Tripartite motif-containing protein 63</fullName>
    </alternativeName>
</protein>
<proteinExistence type="evidence at protein level"/>
<accession>Q969Q1</accession>
<accession>B4DN95</accession>
<accession>Q5T2I1</accession>
<accession>Q96BD3</accession>
<accession>Q96KD9</accession>
<accession>Q9BYV4</accession>